<keyword id="KW-0472">Membrane</keyword>
<keyword id="KW-0597">Phosphoprotein</keyword>
<keyword id="KW-1185">Reference proteome</keyword>
<keyword id="KW-0812">Transmembrane</keyword>
<keyword id="KW-1133">Transmembrane helix</keyword>
<sequence>MYHTHMHESLISVTSTVSVSDASYAYARLTRRDDSDSSSSSASSTKNSKSAECTGSKQQCQLPTDSSHSTSVTVGVAVAVPVGVIIIVLAVILCIVYRRSKKEAEEDNDPDFEGDSEFLPTMKDYSPGINHLYSSDSQQDFMEKTLQQPPSDPFVGSMHSSKYNVRSATPPAIGRSWYVDPFQLPQESNDSNSLRDFAMRVQEDGLGGYKVAAESRNASQTSLHPDNFSNCTPIRASSRFQESESFRSHGSPIHNNQLSRGSATEGANKQFTFPNEDNDSSSVSEEAEVLNESNESASNDAFEFELDNSSEKTHERNLRFGKDDDNYELQDIREAEHMNDRSSSKSQDDDYYVSLLSPNEEEDIKRMKSIYQVYLDRAKTMKKEEDKADNANDISQEENRVDNIVQNPLPSIKINNNDNIDNNEVPEAKHLVKEALPLNNTNLAEYGPEMAQSQKQYPVQDTLTVNDTEAAPSNRIASSIYSEAIQPLNYQDQYQQQEQSPVYNGHTQYPGNGYSGNPQQQGYTAQFVQNPQWYGVPTPQQQQHNHPQTLETIGELPTPAYLAQSASSHSLTSFKRPNKQQLLQLQTARLNGTALNPVDHPEMFYSPTNDAYYAPQQQGQYMKFNENGAVPSPYQLRQSVVMTNPSDLTAKPSYKPAGSFRSVSATNSRNNSLTTQNNIYLQQQQQQLYNSRVSGILEETDVVQPPSVGGILPHSGSQDDLRKQLGSSHNYTVN</sequence>
<name>SKG6_YEAST</name>
<gene>
    <name type="primary">SKG6</name>
    <name type="ordered locus">YHR149C</name>
</gene>
<reference key="1">
    <citation type="journal article" date="1994" name="Science">
        <title>Complete nucleotide sequence of Saccharomyces cerevisiae chromosome VIII.</title>
        <authorList>
            <person name="Johnston M."/>
            <person name="Andrews S."/>
            <person name="Brinkman R."/>
            <person name="Cooper J."/>
            <person name="Ding H."/>
            <person name="Dover J."/>
            <person name="Du Z."/>
            <person name="Favello A."/>
            <person name="Fulton L."/>
            <person name="Gattung S."/>
            <person name="Geisel C."/>
            <person name="Kirsten J."/>
            <person name="Kucaba T."/>
            <person name="Hillier L.W."/>
            <person name="Jier M."/>
            <person name="Johnston L."/>
            <person name="Langston Y."/>
            <person name="Latreille P."/>
            <person name="Louis E.J."/>
            <person name="Macri C."/>
            <person name="Mardis E."/>
            <person name="Menezes S."/>
            <person name="Mouser L."/>
            <person name="Nhan M."/>
            <person name="Rifkin L."/>
            <person name="Riles L."/>
            <person name="St Peter H."/>
            <person name="Trevaskis E."/>
            <person name="Vaughan K."/>
            <person name="Vignati D."/>
            <person name="Wilcox L."/>
            <person name="Wohldman P."/>
            <person name="Waterston R."/>
            <person name="Wilson R."/>
            <person name="Vaudin M."/>
        </authorList>
    </citation>
    <scope>NUCLEOTIDE SEQUENCE [LARGE SCALE GENOMIC DNA]</scope>
    <source>
        <strain>ATCC 204508 / S288c</strain>
    </source>
</reference>
<reference key="2">
    <citation type="journal article" date="2014" name="G3 (Bethesda)">
        <title>The reference genome sequence of Saccharomyces cerevisiae: Then and now.</title>
        <authorList>
            <person name="Engel S.R."/>
            <person name="Dietrich F.S."/>
            <person name="Fisk D.G."/>
            <person name="Binkley G."/>
            <person name="Balakrishnan R."/>
            <person name="Costanzo M.C."/>
            <person name="Dwight S.S."/>
            <person name="Hitz B.C."/>
            <person name="Karra K."/>
            <person name="Nash R.S."/>
            <person name="Weng S."/>
            <person name="Wong E.D."/>
            <person name="Lloyd P."/>
            <person name="Skrzypek M.S."/>
            <person name="Miyasato S.R."/>
            <person name="Simison M."/>
            <person name="Cherry J.M."/>
        </authorList>
    </citation>
    <scope>GENOME REANNOTATION</scope>
    <source>
        <strain>ATCC 204508 / S288c</strain>
    </source>
</reference>
<reference key="3">
    <citation type="journal article" date="2007" name="Genome Res.">
        <title>Approaching a complete repository of sequence-verified protein-encoding clones for Saccharomyces cerevisiae.</title>
        <authorList>
            <person name="Hu Y."/>
            <person name="Rolfs A."/>
            <person name="Bhullar B."/>
            <person name="Murthy T.V.S."/>
            <person name="Zhu C."/>
            <person name="Berger M.F."/>
            <person name="Camargo A.A."/>
            <person name="Kelley F."/>
            <person name="McCarron S."/>
            <person name="Jepson D."/>
            <person name="Richardson A."/>
            <person name="Raphael J."/>
            <person name="Moreira D."/>
            <person name="Taycher E."/>
            <person name="Zuo D."/>
            <person name="Mohr S."/>
            <person name="Kane M.F."/>
            <person name="Williamson J."/>
            <person name="Simpson A.J.G."/>
            <person name="Bulyk M.L."/>
            <person name="Harlow E."/>
            <person name="Marsischky G."/>
            <person name="Kolodner R.D."/>
            <person name="LaBaer J."/>
        </authorList>
    </citation>
    <scope>NUCLEOTIDE SEQUENCE [GENOMIC DNA]</scope>
    <source>
        <strain>ATCC 204508 / S288c</strain>
    </source>
</reference>
<reference key="4">
    <citation type="journal article" date="1993" name="Curr. Genet.">
        <title>Molecular cloning and analysis of the nuclear gene MRP-L6 coding for a putative mitochondrial ribosomal protein from Saccharomyces cerevisiae.</title>
        <authorList>
            <person name="Schwank S."/>
            <person name="Harrer R."/>
            <person name="Schueller H.-J."/>
            <person name="Schweizer E."/>
        </authorList>
    </citation>
    <scope>NUCLEOTIDE SEQUENCE [GENOMIC DNA] OF 338-734</scope>
</reference>
<reference key="5">
    <citation type="journal article" date="2001" name="J. Cell Biol.">
        <title>A protein interaction map for cell polarity development.</title>
        <authorList>
            <person name="Drees B.L."/>
            <person name="Sundin B.A."/>
            <person name="Brazeau E."/>
            <person name="Caviston J.P."/>
            <person name="Chen G.-C."/>
            <person name="Guo W."/>
            <person name="Kozminski K.G."/>
            <person name="Lau M.W."/>
            <person name="Moskow J.J."/>
            <person name="Tong A."/>
            <person name="Schenkman L.R."/>
            <person name="McKenzie A. III"/>
            <person name="Brennwald P.J."/>
            <person name="Longtine M."/>
            <person name="Bi E."/>
            <person name="Chan C."/>
            <person name="Novick P."/>
            <person name="Boone C."/>
            <person name="Pringle J.R."/>
            <person name="Davis T.N."/>
            <person name="Fields S."/>
            <person name="Drubin D.G."/>
        </authorList>
    </citation>
    <scope>INTERACTION WITH ZDS1 AND ZDS2</scope>
</reference>
<reference key="6">
    <citation type="journal article" date="2003" name="Nature">
        <title>Global analysis of protein expression in yeast.</title>
        <authorList>
            <person name="Ghaemmaghami S."/>
            <person name="Huh W.-K."/>
            <person name="Bower K."/>
            <person name="Howson R.W."/>
            <person name="Belle A."/>
            <person name="Dephoure N."/>
            <person name="O'Shea E.K."/>
            <person name="Weissman J.S."/>
        </authorList>
    </citation>
    <scope>LEVEL OF PROTEIN EXPRESSION [LARGE SCALE ANALYSIS]</scope>
</reference>
<reference key="7">
    <citation type="journal article" date="2003" name="Nature">
        <title>Targets of the cyclin-dependent kinase Cdk1.</title>
        <authorList>
            <person name="Ubersax J.A."/>
            <person name="Woodbury E.L."/>
            <person name="Quang P.N."/>
            <person name="Paraz M."/>
            <person name="Blethrow J.D."/>
            <person name="Shah K."/>
            <person name="Shokat K.M."/>
            <person name="Morgan D.O."/>
        </authorList>
    </citation>
    <scope>PHOSPHORYLATION BY CDC28</scope>
</reference>
<reference key="8">
    <citation type="journal article" date="2005" name="J. Gen. Appl. Microbiol.">
        <title>SKG6, a suppressor gene of synthetic lethality of kex2Delta gas1Delta mutations, encodes a novel membrane protein showing polarized intracellular localization.</title>
        <authorList>
            <person name="Tomishige N."/>
            <person name="Noda Y."/>
            <person name="Adachi H."/>
            <person name="Yoda K."/>
        </authorList>
    </citation>
    <scope>FUNCTION</scope>
    <scope>SUBCELLULAR LOCATION</scope>
</reference>
<reference key="9">
    <citation type="journal article" date="2005" name="Mol. Cell. Proteomics">
        <title>Quantitative phosphoproteomics applied to the yeast pheromone signaling pathway.</title>
        <authorList>
            <person name="Gruhler A."/>
            <person name="Olsen J.V."/>
            <person name="Mohammed S."/>
            <person name="Mortensen P."/>
            <person name="Faergeman N.J."/>
            <person name="Mann M."/>
            <person name="Jensen O.N."/>
        </authorList>
    </citation>
    <scope>PHOSPHORYLATION [LARGE SCALE ANALYSIS] AT THR-169</scope>
    <scope>IDENTIFICATION BY MASS SPECTROMETRY [LARGE SCALE ANALYSIS]</scope>
    <source>
        <strain>YAL6B</strain>
    </source>
</reference>
<reference key="10">
    <citation type="journal article" date="2005" name="Yeast">
        <title>SKG1, a suppressor gene of synthetic lethality of kex2Deltagas1Delta mutations, encodes a novel membrane protein that affects cell wall composition.</title>
        <authorList>
            <person name="Tomishige N."/>
            <person name="Noda Y."/>
            <person name="Adachi H."/>
            <person name="Shimoi H."/>
            <person name="Yoda K."/>
        </authorList>
    </citation>
    <scope>GENE NAME</scope>
</reference>
<reference key="11">
    <citation type="journal article" date="2007" name="J. Proteome Res.">
        <title>Large-scale phosphorylation analysis of alpha-factor-arrested Saccharomyces cerevisiae.</title>
        <authorList>
            <person name="Li X."/>
            <person name="Gerber S.A."/>
            <person name="Rudner A.D."/>
            <person name="Beausoleil S.A."/>
            <person name="Haas W."/>
            <person name="Villen J."/>
            <person name="Elias J.E."/>
            <person name="Gygi S.P."/>
        </authorList>
    </citation>
    <scope>PHOSPHORYLATION [LARGE SCALE ANALYSIS] AT SER-137; SER-222 AND SER-369</scope>
    <scope>IDENTIFICATION BY MASS SPECTROMETRY [LARGE SCALE ANALYSIS]</scope>
    <source>
        <strain>ADR376</strain>
    </source>
</reference>
<reference key="12">
    <citation type="journal article" date="2008" name="Mol. Cell. Proteomics">
        <title>A multidimensional chromatography technology for in-depth phosphoproteome analysis.</title>
        <authorList>
            <person name="Albuquerque C.P."/>
            <person name="Smolka M.B."/>
            <person name="Payne S.H."/>
            <person name="Bafna V."/>
            <person name="Eng J."/>
            <person name="Zhou H."/>
        </authorList>
    </citation>
    <scope>PHOSPHORYLATION [LARGE SCALE ANALYSIS] AT SER-219 AND SER-251</scope>
    <scope>IDENTIFICATION BY MASS SPECTROMETRY [LARGE SCALE ANALYSIS]</scope>
</reference>
<reference key="13">
    <citation type="journal article" date="2009" name="Science">
        <title>Global analysis of Cdk1 substrate phosphorylation sites provides insights into evolution.</title>
        <authorList>
            <person name="Holt L.J."/>
            <person name="Tuch B.B."/>
            <person name="Villen J."/>
            <person name="Johnson A.D."/>
            <person name="Gygi S.P."/>
            <person name="Morgan D.O."/>
        </authorList>
    </citation>
    <scope>PHOSPHORYLATION [LARGE SCALE ANALYSIS] AT SER-137; SER-191; SER-193; SER-219; THR-221; SER-222; SER-672 AND SER-717</scope>
    <scope>IDENTIFICATION BY MASS SPECTROMETRY [LARGE SCALE ANALYSIS]</scope>
</reference>
<proteinExistence type="evidence at protein level"/>
<feature type="chain" id="PRO_0000202924" description="Protein SKG6">
    <location>
        <begin position="1"/>
        <end position="734"/>
    </location>
</feature>
<feature type="transmembrane region" description="Helical" evidence="1">
    <location>
        <begin position="72"/>
        <end position="96"/>
    </location>
</feature>
<feature type="region of interest" description="Disordered" evidence="2">
    <location>
        <begin position="30"/>
        <end position="68"/>
    </location>
</feature>
<feature type="region of interest" description="Disordered" evidence="2">
    <location>
        <begin position="239"/>
        <end position="327"/>
    </location>
</feature>
<feature type="region of interest" description="Disordered" evidence="2">
    <location>
        <begin position="647"/>
        <end position="671"/>
    </location>
</feature>
<feature type="region of interest" description="Disordered" evidence="2">
    <location>
        <begin position="707"/>
        <end position="734"/>
    </location>
</feature>
<feature type="compositionally biased region" description="Low complexity" evidence="2">
    <location>
        <begin position="37"/>
        <end position="51"/>
    </location>
</feature>
<feature type="compositionally biased region" description="Polar residues" evidence="2">
    <location>
        <begin position="53"/>
        <end position="68"/>
    </location>
</feature>
<feature type="compositionally biased region" description="Polar residues" evidence="2">
    <location>
        <begin position="253"/>
        <end position="273"/>
    </location>
</feature>
<feature type="compositionally biased region" description="Low complexity" evidence="2">
    <location>
        <begin position="280"/>
        <end position="299"/>
    </location>
</feature>
<feature type="compositionally biased region" description="Basic and acidic residues" evidence="2">
    <location>
        <begin position="309"/>
        <end position="327"/>
    </location>
</feature>
<feature type="compositionally biased region" description="Polar residues" evidence="2">
    <location>
        <begin position="661"/>
        <end position="671"/>
    </location>
</feature>
<feature type="compositionally biased region" description="Polar residues" evidence="2">
    <location>
        <begin position="725"/>
        <end position="734"/>
    </location>
</feature>
<feature type="modified residue" description="Phosphoserine" evidence="8 10">
    <location>
        <position position="137"/>
    </location>
</feature>
<feature type="modified residue" description="Phosphothreonine" evidence="7">
    <location>
        <position position="169"/>
    </location>
</feature>
<feature type="modified residue" description="Phosphoserine" evidence="10">
    <location>
        <position position="191"/>
    </location>
</feature>
<feature type="modified residue" description="Phosphoserine" evidence="10">
    <location>
        <position position="193"/>
    </location>
</feature>
<feature type="modified residue" description="Phosphoserine" evidence="9 10">
    <location>
        <position position="219"/>
    </location>
</feature>
<feature type="modified residue" description="Phosphothreonine" evidence="10">
    <location>
        <position position="221"/>
    </location>
</feature>
<feature type="modified residue" description="Phosphoserine" evidence="8 10">
    <location>
        <position position="222"/>
    </location>
</feature>
<feature type="modified residue" description="Phosphoserine" evidence="9">
    <location>
        <position position="251"/>
    </location>
</feature>
<feature type="modified residue" description="Phosphoserine" evidence="8">
    <location>
        <position position="369"/>
    </location>
</feature>
<feature type="modified residue" description="Phosphoserine" evidence="10">
    <location>
        <position position="672"/>
    </location>
</feature>
<feature type="modified residue" description="Phosphoserine" evidence="10">
    <location>
        <position position="717"/>
    </location>
</feature>
<feature type="sequence conflict" description="In Ref. 4; CAA49235." evidence="6" ref="4">
    <original>L</original>
    <variation>R</variation>
    <location>
        <position position="355"/>
    </location>
</feature>
<feature type="sequence conflict" description="In Ref. 4; CAA49235." evidence="6" ref="4">
    <original>N</original>
    <variation>D</variation>
    <location>
        <position position="403"/>
    </location>
</feature>
<feature type="sequence conflict" description="In Ref. 4; CAA49235." evidence="6" ref="4">
    <original>M</original>
    <variation>I</variation>
    <location>
        <position position="450"/>
    </location>
</feature>
<feature type="sequence conflict" description="In Ref. 4; CAA49235." evidence="6" ref="4">
    <original>P</original>
    <variation>A</variation>
    <location>
        <position position="472"/>
    </location>
</feature>
<feature type="sequence conflict" description="In Ref. 4; CAA49235." evidence="6" ref="4">
    <location>
        <position position="497"/>
    </location>
</feature>
<feature type="sequence conflict" description="In Ref. 4; CAA49235." evidence="6" ref="4">
    <original>Q</original>
    <variation>R</variation>
    <location>
        <position position="499"/>
    </location>
</feature>
<feature type="sequence conflict" description="In Ref. 4; CAA49235." evidence="6" ref="4">
    <original>P</original>
    <variation>S</variation>
    <location>
        <position position="510"/>
    </location>
</feature>
<accession>P32900</accession>
<accession>D3DL98</accession>
<protein>
    <recommendedName>
        <fullName>Protein SKG6</fullName>
    </recommendedName>
    <alternativeName>
        <fullName>Suppressor of lethality of KEX2-GAS1 double null mutant 6</fullName>
    </alternativeName>
</protein>
<evidence type="ECO:0000255" key="1"/>
<evidence type="ECO:0000256" key="2">
    <source>
        <dbReference type="SAM" id="MobiDB-lite"/>
    </source>
</evidence>
<evidence type="ECO:0000269" key="3">
    <source>
    </source>
</evidence>
<evidence type="ECO:0000269" key="4">
    <source>
    </source>
</evidence>
<evidence type="ECO:0000269" key="5">
    <source>
    </source>
</evidence>
<evidence type="ECO:0000305" key="6"/>
<evidence type="ECO:0007744" key="7">
    <source>
    </source>
</evidence>
<evidence type="ECO:0007744" key="8">
    <source>
    </source>
</evidence>
<evidence type="ECO:0007744" key="9">
    <source>
    </source>
</evidence>
<evidence type="ECO:0007744" key="10">
    <source>
    </source>
</evidence>
<comment type="function">
    <text evidence="5">May be involved in the polarity establishment process. Suppresses the lethality of KEX2-GAS1 double null mutant when overexpressed.</text>
</comment>
<comment type="subunit">
    <text>Interacts with ZDS1 and ZDS2.</text>
</comment>
<comment type="subcellular location">
    <subcellularLocation>
        <location evidence="5">Membrane</location>
        <topology evidence="5">Single-pass membrane protein</topology>
    </subcellularLocation>
    <text>Localizes primarily to the growing sites, such as an incipient bud site in the cells with emerging buds, a bud tip in small- or medium-budded cells, or a cell periphery in large-budded cells.</text>
</comment>
<comment type="PTM">
    <text evidence="4">Phosphorylated by CDC28.</text>
</comment>
<comment type="miscellaneous">
    <text evidence="3">Present with 1550 molecules/cell in log phase SD medium.</text>
</comment>
<comment type="similarity">
    <text evidence="6">Belongs to the SKG6/TOS2 family.</text>
</comment>
<organism>
    <name type="scientific">Saccharomyces cerevisiae (strain ATCC 204508 / S288c)</name>
    <name type="common">Baker's yeast</name>
    <dbReference type="NCBI Taxonomy" id="559292"/>
    <lineage>
        <taxon>Eukaryota</taxon>
        <taxon>Fungi</taxon>
        <taxon>Dikarya</taxon>
        <taxon>Ascomycota</taxon>
        <taxon>Saccharomycotina</taxon>
        <taxon>Saccharomycetes</taxon>
        <taxon>Saccharomycetales</taxon>
        <taxon>Saccharomycetaceae</taxon>
        <taxon>Saccharomyces</taxon>
    </lineage>
</organism>
<dbReference type="EMBL" id="U10397">
    <property type="protein sequence ID" value="AAB68987.1"/>
    <property type="molecule type" value="Genomic_DNA"/>
</dbReference>
<dbReference type="EMBL" id="AY723827">
    <property type="protein sequence ID" value="AAU09744.1"/>
    <property type="molecule type" value="Genomic_DNA"/>
</dbReference>
<dbReference type="EMBL" id="X69480">
    <property type="protein sequence ID" value="CAA49235.1"/>
    <property type="molecule type" value="Genomic_DNA"/>
</dbReference>
<dbReference type="EMBL" id="BK006934">
    <property type="protein sequence ID" value="DAA06842.1"/>
    <property type="molecule type" value="Genomic_DNA"/>
</dbReference>
<dbReference type="PIR" id="S46765">
    <property type="entry name" value="S46765"/>
</dbReference>
<dbReference type="RefSeq" id="NP_012019.1">
    <property type="nucleotide sequence ID" value="NM_001179280.1"/>
</dbReference>
<dbReference type="SMR" id="P32900"/>
<dbReference type="BioGRID" id="36583">
    <property type="interactions" value="39"/>
</dbReference>
<dbReference type="DIP" id="DIP-4592N"/>
<dbReference type="FunCoup" id="P32900">
    <property type="interactions" value="63"/>
</dbReference>
<dbReference type="IntAct" id="P32900">
    <property type="interactions" value="10"/>
</dbReference>
<dbReference type="MINT" id="P32900"/>
<dbReference type="STRING" id="4932.YHR149C"/>
<dbReference type="GlyGen" id="P32900">
    <property type="glycosylation" value="2 sites, 1 O-linked glycan (1 site)"/>
</dbReference>
<dbReference type="iPTMnet" id="P32900"/>
<dbReference type="PaxDb" id="4932-YHR149C"/>
<dbReference type="PeptideAtlas" id="P32900"/>
<dbReference type="EnsemblFungi" id="YHR149C_mRNA">
    <property type="protein sequence ID" value="YHR149C"/>
    <property type="gene ID" value="YHR149C"/>
</dbReference>
<dbReference type="GeneID" id="856554"/>
<dbReference type="KEGG" id="sce:YHR149C"/>
<dbReference type="AGR" id="SGD:S000001192"/>
<dbReference type="SGD" id="S000001192">
    <property type="gene designation" value="SKG6"/>
</dbReference>
<dbReference type="VEuPathDB" id="FungiDB:YHR149C"/>
<dbReference type="eggNOG" id="ENOG502REX9">
    <property type="taxonomic scope" value="Eukaryota"/>
</dbReference>
<dbReference type="GeneTree" id="ENSGT00940000176525"/>
<dbReference type="HOGENOM" id="CLU_026020_0_0_1"/>
<dbReference type="InParanoid" id="P32900"/>
<dbReference type="OMA" id="RMKSIYQ"/>
<dbReference type="OrthoDB" id="4035953at2759"/>
<dbReference type="BioCyc" id="YEAST:G3O-31184-MONOMER"/>
<dbReference type="BioGRID-ORCS" id="856554">
    <property type="hits" value="4 hits in 10 CRISPR screens"/>
</dbReference>
<dbReference type="PRO" id="PR:P32900"/>
<dbReference type="Proteomes" id="UP000002311">
    <property type="component" value="Chromosome VIII"/>
</dbReference>
<dbReference type="RNAct" id="P32900">
    <property type="molecule type" value="protein"/>
</dbReference>
<dbReference type="GO" id="GO:0071944">
    <property type="term" value="C:cell periphery"/>
    <property type="evidence" value="ECO:0000314"/>
    <property type="project" value="SGD"/>
</dbReference>
<dbReference type="GO" id="GO:0005935">
    <property type="term" value="C:cellular bud neck"/>
    <property type="evidence" value="ECO:0000314"/>
    <property type="project" value="SGD"/>
</dbReference>
<dbReference type="GO" id="GO:0005934">
    <property type="term" value="C:cellular bud tip"/>
    <property type="evidence" value="ECO:0000314"/>
    <property type="project" value="SGD"/>
</dbReference>
<dbReference type="GO" id="GO:0000131">
    <property type="term" value="C:incipient cellular bud site"/>
    <property type="evidence" value="ECO:0000314"/>
    <property type="project" value="SGD"/>
</dbReference>
<dbReference type="GO" id="GO:0016020">
    <property type="term" value="C:membrane"/>
    <property type="evidence" value="ECO:0000314"/>
    <property type="project" value="SGD"/>
</dbReference>
<dbReference type="GO" id="GO:1902413">
    <property type="term" value="P:negative regulation of mitotic cytokinesis"/>
    <property type="evidence" value="ECO:0000315"/>
    <property type="project" value="SGD"/>
</dbReference>
<dbReference type="InterPro" id="IPR051694">
    <property type="entry name" value="Immunoregulatory_rcpt-like"/>
</dbReference>
<dbReference type="InterPro" id="IPR014805">
    <property type="entry name" value="SKG6/TOS2-like"/>
</dbReference>
<dbReference type="PANTHER" id="PTHR15549:SF26">
    <property type="entry name" value="AXIAL BUDDING PATTERN PROTEIN 2-RELATED"/>
    <property type="match status" value="1"/>
</dbReference>
<dbReference type="PANTHER" id="PTHR15549">
    <property type="entry name" value="PAIRED IMMUNOGLOBULIN-LIKE TYPE 2 RECEPTOR"/>
    <property type="match status" value="1"/>
</dbReference>
<dbReference type="Pfam" id="PF08693">
    <property type="entry name" value="SKG6"/>
    <property type="match status" value="1"/>
</dbReference>